<evidence type="ECO:0000255" key="1">
    <source>
        <dbReference type="PROSITE-ProRule" id="PRU01020"/>
    </source>
</evidence>
<evidence type="ECO:0000269" key="2">
    <source>
    </source>
</evidence>
<evidence type="ECO:0000269" key="3">
    <source>
    </source>
</evidence>
<evidence type="ECO:0000269" key="4">
    <source>
    </source>
</evidence>
<evidence type="ECO:0000303" key="5">
    <source>
    </source>
</evidence>
<evidence type="ECO:0000305" key="6"/>
<evidence type="ECO:0000305" key="7">
    <source>
    </source>
</evidence>
<protein>
    <recommendedName>
        <fullName evidence="5">O-methyltransferase sol2</fullName>
        <ecNumber evidence="1">2.1.1.-</ecNumber>
    </recommendedName>
    <alternativeName>
        <fullName evidence="5">Solanapyrone biosynthesis protein 2</fullName>
    </alternativeName>
</protein>
<organism>
    <name type="scientific">Alternaria solani</name>
    <dbReference type="NCBI Taxonomy" id="48100"/>
    <lineage>
        <taxon>Eukaryota</taxon>
        <taxon>Fungi</taxon>
        <taxon>Dikarya</taxon>
        <taxon>Ascomycota</taxon>
        <taxon>Pezizomycotina</taxon>
        <taxon>Dothideomycetes</taxon>
        <taxon>Pleosporomycetidae</taxon>
        <taxon>Pleosporales</taxon>
        <taxon>Pleosporineae</taxon>
        <taxon>Pleosporaceae</taxon>
        <taxon>Alternaria</taxon>
        <taxon>Alternaria sect. Porri</taxon>
    </lineage>
</organism>
<feature type="chain" id="PRO_0000438552" description="O-methyltransferase sol2">
    <location>
        <begin position="1"/>
        <end position="427"/>
    </location>
</feature>
<feature type="active site" description="Proton acceptor" evidence="1">
    <location>
        <position position="327"/>
    </location>
</feature>
<feature type="binding site" evidence="1">
    <location>
        <position position="281"/>
    </location>
    <ligand>
        <name>S-adenosyl-L-methionine</name>
        <dbReference type="ChEBI" id="CHEBI:59789"/>
    </ligand>
</feature>
<dbReference type="EC" id="2.1.1.-" evidence="1"/>
<dbReference type="EMBL" id="AB514562">
    <property type="protein sequence ID" value="BAJ09788.1"/>
    <property type="molecule type" value="Genomic_DNA"/>
</dbReference>
<dbReference type="SMR" id="D7UQ43"/>
<dbReference type="GO" id="GO:0008171">
    <property type="term" value="F:O-methyltransferase activity"/>
    <property type="evidence" value="ECO:0007669"/>
    <property type="project" value="InterPro"/>
</dbReference>
<dbReference type="GO" id="GO:0046983">
    <property type="term" value="F:protein dimerization activity"/>
    <property type="evidence" value="ECO:0007669"/>
    <property type="project" value="InterPro"/>
</dbReference>
<dbReference type="GO" id="GO:0032259">
    <property type="term" value="P:methylation"/>
    <property type="evidence" value="ECO:0007669"/>
    <property type="project" value="UniProtKB-KW"/>
</dbReference>
<dbReference type="GO" id="GO:0044550">
    <property type="term" value="P:secondary metabolite biosynthetic process"/>
    <property type="evidence" value="ECO:0007669"/>
    <property type="project" value="UniProtKB-ARBA"/>
</dbReference>
<dbReference type="Gene3D" id="3.40.50.150">
    <property type="entry name" value="Vaccinia Virus protein VP39"/>
    <property type="match status" value="1"/>
</dbReference>
<dbReference type="Gene3D" id="1.10.10.10">
    <property type="entry name" value="Winged helix-like DNA-binding domain superfamily/Winged helix DNA-binding domain"/>
    <property type="match status" value="1"/>
</dbReference>
<dbReference type="InterPro" id="IPR016461">
    <property type="entry name" value="COMT-like"/>
</dbReference>
<dbReference type="InterPro" id="IPR001077">
    <property type="entry name" value="O_MeTrfase_dom"/>
</dbReference>
<dbReference type="InterPro" id="IPR012967">
    <property type="entry name" value="Plant_O-MeTrfase_dimerisation"/>
</dbReference>
<dbReference type="InterPro" id="IPR029063">
    <property type="entry name" value="SAM-dependent_MTases_sf"/>
</dbReference>
<dbReference type="InterPro" id="IPR036388">
    <property type="entry name" value="WH-like_DNA-bd_sf"/>
</dbReference>
<dbReference type="InterPro" id="IPR036390">
    <property type="entry name" value="WH_DNA-bd_sf"/>
</dbReference>
<dbReference type="PANTHER" id="PTHR43712">
    <property type="entry name" value="PUTATIVE (AFU_ORTHOLOGUE AFUA_4G14580)-RELATED"/>
    <property type="match status" value="1"/>
</dbReference>
<dbReference type="PANTHER" id="PTHR43712:SF12">
    <property type="entry name" value="STERIGMATOCYSTIN 8-O-METHYLTRANSFERASE"/>
    <property type="match status" value="1"/>
</dbReference>
<dbReference type="Pfam" id="PF08100">
    <property type="entry name" value="Dimerisation"/>
    <property type="match status" value="1"/>
</dbReference>
<dbReference type="Pfam" id="PF00891">
    <property type="entry name" value="Methyltransf_2"/>
    <property type="match status" value="1"/>
</dbReference>
<dbReference type="SUPFAM" id="SSF53335">
    <property type="entry name" value="S-adenosyl-L-methionine-dependent methyltransferases"/>
    <property type="match status" value="1"/>
</dbReference>
<dbReference type="SUPFAM" id="SSF46785">
    <property type="entry name" value="Winged helix' DNA-binding domain"/>
    <property type="match status" value="1"/>
</dbReference>
<dbReference type="PROSITE" id="PS51683">
    <property type="entry name" value="SAM_OMT_II"/>
    <property type="match status" value="1"/>
</dbReference>
<name>SOL2_ALTSO</name>
<reference key="1">
    <citation type="journal article" date="2010" name="ChemBioChem">
        <title>Solanapyrone synthase, a possible Diels-Alderase and iterative type I polyketide synthase encoded in a biosynthetic gene cluster from Alternaria solani.</title>
        <authorList>
            <person name="Kasahara K."/>
            <person name="Miyamoto T."/>
            <person name="Fujimoto T."/>
            <person name="Oguri H."/>
            <person name="Tokiwano T."/>
            <person name="Oikawa H."/>
            <person name="Ebizuka Y."/>
            <person name="Fujii I."/>
        </authorList>
    </citation>
    <scope>NUCLEOTIDE SEQUENCE [GENOMIC DNA]</scope>
    <scope>FUNCTION</scope>
</reference>
<reference key="2">
    <citation type="journal article" date="1998" name="Biochim. Biophys. Acta">
        <title>Enzymatic activity and partial purification of solanapyrone synthase: first enzyme catalyzing Diels-Alder reaction.</title>
        <authorList>
            <person name="Katayama K."/>
            <person name="Kobayashi T."/>
            <person name="Oikawa H."/>
            <person name="Honma M."/>
            <person name="Ichihara A."/>
        </authorList>
    </citation>
    <scope>FUNCTION</scope>
</reference>
<reference key="3">
    <citation type="journal article" date="2008" name="Biosci. Biotechnol. Biochem.">
        <title>Purification and N-terminal amino acid sequence of solanapyrone synthase, a natural Diels-Alderase from Alternaria solani.</title>
        <authorList>
            <person name="Katayama K."/>
            <person name="Kobayashi T."/>
            <person name="Chijimatsu M."/>
            <person name="Ichihara A."/>
            <person name="Oikawa H."/>
        </authorList>
    </citation>
    <scope>FUNCTION</scope>
</reference>
<sequence length="427" mass="46803">MALKSTNGTHAGPTASAASLASLAANISEKAASLSTYLESQGHAQPSFLPGCADPPETEEYLALHTSLTSSLEDLQRLVDGPRRSLRPFIMIGNDLAALQVAFDFGFFQLIPPEGSMDVETLAHKVGIDADRTARVLRMLATHRIFVEPKPGFFAHTAASAVFHDDEELRCAGHYMLDECFKAATACSDCIKASPNDSDSTHSPFNTYFGVPMFSYYEQNPQFAARFAKAMAVDRQIAELRDCFPWGDIKGTVVDVGGGSGHISMALARNFPKLDFIVQDDSEKMLAQGRARNLSDIEGRISFMKHSFFHPQPIGGAGAFFIRQCTHNWCDRDVVKILKSFVPGLENSAPGTPLLINDTVLPVPGSKPLHEERALRQMDMLMFVVLGAKQRTAKEFEALLKEADARYEIRRVHADGSMGLVEVHLNI</sequence>
<gene>
    <name type="primary">sol2</name>
</gene>
<keyword id="KW-0489">Methyltransferase</keyword>
<keyword id="KW-0949">S-adenosyl-L-methionine</keyword>
<keyword id="KW-0808">Transferase</keyword>
<accession>D7UQ43</accession>
<comment type="function">
    <text evidence="2 3 4">O-methyltransferase; part of the gene cluster that mediates the biosynthesis of the phytotoxin solanapyrone, a causal agent of early blight disease of potato and tomato (PubMed:20486243). The prosolanapyrone synthase sol1 is a polyketide synthase that produces the octaketide desmethylprosolanapyrone I via sequential condensations of 7 malonyl-CoA units with one acetyl-CoA unit, and one methylation step (PubMed:20486243). The octaketide backbone is further methylated by the sol2 O-methyltransferase to yield prosolanapyrone I (PubMed:20486243). Prosolanapyrone I is hydroxylated to prosolanapyrone II by the cytochrome P450 monooxygenase sol6 (PubMed:20486243). The solanapyrone synthase sol5 then catalyzes the oxidation of prosolanapyrone II and the subsequent Diels Alder cycloisomerization of the product prosolanapyrone III to solanapyrones A and D (PubMed:18256508, PubMed:9659400). Solanapyrones A and D are then converted into solanapyrones B and E, respectively, by the sol3 dehydrogenase (PubMed:20486243).</text>
</comment>
<comment type="pathway">
    <text evidence="7">Phytotoxin biosynthesis.</text>
</comment>
<comment type="similarity">
    <text evidence="6">Belongs to the class I-like SAM-binding methyltransferase superfamily. Cation-independent O-methyltransferase family. COMT subfamily.</text>
</comment>
<proteinExistence type="inferred from homology"/>